<comment type="function">
    <text evidence="1">Involved in allosteric regulation of aspartate carbamoyltransferase.</text>
</comment>
<comment type="cofactor">
    <cofactor evidence="1">
        <name>Zn(2+)</name>
        <dbReference type="ChEBI" id="CHEBI:29105"/>
    </cofactor>
    <text evidence="1">Binds 1 zinc ion per subunit.</text>
</comment>
<comment type="subunit">
    <text evidence="1">Contains catalytic and regulatory chains.</text>
</comment>
<comment type="similarity">
    <text evidence="1">Belongs to the PyrI family.</text>
</comment>
<comment type="sequence caution" evidence="2">
    <conflict type="erroneous initiation">
        <sequence resource="EMBL-CDS" id="AAG20943"/>
    </conflict>
</comment>
<organism>
    <name type="scientific">Halobacterium salinarum (strain ATCC 700922 / JCM 11081 / NRC-1)</name>
    <name type="common">Halobacterium halobium</name>
    <dbReference type="NCBI Taxonomy" id="64091"/>
    <lineage>
        <taxon>Archaea</taxon>
        <taxon>Methanobacteriati</taxon>
        <taxon>Methanobacteriota</taxon>
        <taxon>Stenosarchaea group</taxon>
        <taxon>Halobacteria</taxon>
        <taxon>Halobacteriales</taxon>
        <taxon>Halobacteriaceae</taxon>
        <taxon>Halobacterium</taxon>
        <taxon>Halobacterium salinarum NRC-34001</taxon>
    </lineage>
</organism>
<accession>Q9HHN3</accession>
<keyword id="KW-0479">Metal-binding</keyword>
<keyword id="KW-0614">Plasmid</keyword>
<keyword id="KW-0665">Pyrimidine biosynthesis</keyword>
<keyword id="KW-1185">Reference proteome</keyword>
<keyword id="KW-0862">Zinc</keyword>
<sequence>MSSDQHLQVSKIQAGTVIDHIPAGQALQVLQILGTNGASDDQITVGMNVTSERHHRKDIVKIEGRELSQDEVDVLSLIAPDATINIVRDYEVDEKRRVDRPDVVAGVLSCPNPNCITANDEPVRSGFDVLDDGMRCQYCEQIVSEDIPSLIDPE</sequence>
<protein>
    <recommendedName>
        <fullName evidence="1">Aspartate carbamoyltransferase regulatory chain</fullName>
    </recommendedName>
</protein>
<dbReference type="EMBL" id="AE004438">
    <property type="protein sequence ID" value="AAG20943.1"/>
    <property type="status" value="ALT_INIT"/>
    <property type="molecule type" value="Genomic_DNA"/>
</dbReference>
<dbReference type="SMR" id="Q9HHN3"/>
<dbReference type="FunCoup" id="Q9HHN3">
    <property type="interactions" value="69"/>
</dbReference>
<dbReference type="KEGG" id="hal:VNG_6311G"/>
<dbReference type="PATRIC" id="fig|64091.14.peg.2289"/>
<dbReference type="HOGENOM" id="CLU_128576_0_0_2"/>
<dbReference type="InParanoid" id="Q9HHN3"/>
<dbReference type="OrthoDB" id="7000at2157"/>
<dbReference type="PhylomeDB" id="Q9HHN3"/>
<dbReference type="Proteomes" id="UP000000554">
    <property type="component" value="Plasmid pNRC200"/>
</dbReference>
<dbReference type="GO" id="GO:0009347">
    <property type="term" value="C:aspartate carbamoyltransferase complex"/>
    <property type="evidence" value="ECO:0000318"/>
    <property type="project" value="GO_Central"/>
</dbReference>
<dbReference type="GO" id="GO:0046872">
    <property type="term" value="F:metal ion binding"/>
    <property type="evidence" value="ECO:0007669"/>
    <property type="project" value="UniProtKB-KW"/>
</dbReference>
<dbReference type="GO" id="GO:0006207">
    <property type="term" value="P:'de novo' pyrimidine nucleobase biosynthetic process"/>
    <property type="evidence" value="ECO:0000318"/>
    <property type="project" value="GO_Central"/>
</dbReference>
<dbReference type="GO" id="GO:0006221">
    <property type="term" value="P:pyrimidine nucleotide biosynthetic process"/>
    <property type="evidence" value="ECO:0007669"/>
    <property type="project" value="UniProtKB-UniRule"/>
</dbReference>
<dbReference type="Gene3D" id="2.30.30.20">
    <property type="entry name" value="Aspartate carbamoyltransferase regulatory subunit, C-terminal domain"/>
    <property type="match status" value="1"/>
</dbReference>
<dbReference type="Gene3D" id="3.30.70.140">
    <property type="entry name" value="Aspartate carbamoyltransferase regulatory subunit, N-terminal domain"/>
    <property type="match status" value="1"/>
</dbReference>
<dbReference type="HAMAP" id="MF_00002">
    <property type="entry name" value="Asp_carb_tr_reg"/>
    <property type="match status" value="1"/>
</dbReference>
<dbReference type="InterPro" id="IPR020545">
    <property type="entry name" value="Asp_carbamoyltransf_reg_N"/>
</dbReference>
<dbReference type="InterPro" id="IPR002801">
    <property type="entry name" value="Asp_carbamoylTrfase_reg"/>
</dbReference>
<dbReference type="InterPro" id="IPR020542">
    <property type="entry name" value="Asp_carbamoyltrfase_reg_C"/>
</dbReference>
<dbReference type="InterPro" id="IPR036792">
    <property type="entry name" value="Asp_carbatrfase_reg_C_sf"/>
</dbReference>
<dbReference type="InterPro" id="IPR036793">
    <property type="entry name" value="Asp_carbatrfase_reg_N_sf"/>
</dbReference>
<dbReference type="NCBIfam" id="TIGR00240">
    <property type="entry name" value="ATCase_reg"/>
    <property type="match status" value="1"/>
</dbReference>
<dbReference type="PANTHER" id="PTHR35805">
    <property type="entry name" value="ASPARTATE CARBAMOYLTRANSFERASE REGULATORY CHAIN"/>
    <property type="match status" value="1"/>
</dbReference>
<dbReference type="PANTHER" id="PTHR35805:SF1">
    <property type="entry name" value="ASPARTATE CARBAMOYLTRANSFERASE REGULATORY CHAIN"/>
    <property type="match status" value="1"/>
</dbReference>
<dbReference type="Pfam" id="PF01948">
    <property type="entry name" value="PyrI"/>
    <property type="match status" value="1"/>
</dbReference>
<dbReference type="Pfam" id="PF02748">
    <property type="entry name" value="PyrI_C"/>
    <property type="match status" value="1"/>
</dbReference>
<dbReference type="SUPFAM" id="SSF57825">
    <property type="entry name" value="Aspartate carbamoyltransferase, Regulatory-chain, C-terminal domain"/>
    <property type="match status" value="1"/>
</dbReference>
<dbReference type="SUPFAM" id="SSF54893">
    <property type="entry name" value="Aspartate carbamoyltransferase, Regulatory-chain, N-terminal domain"/>
    <property type="match status" value="1"/>
</dbReference>
<reference key="1">
    <citation type="journal article" date="2000" name="Proc. Natl. Acad. Sci. U.S.A.">
        <title>Genome sequence of Halobacterium species NRC-1.</title>
        <authorList>
            <person name="Ng W.V."/>
            <person name="Kennedy S.P."/>
            <person name="Mahairas G.G."/>
            <person name="Berquist B."/>
            <person name="Pan M."/>
            <person name="Shukla H.D."/>
            <person name="Lasky S.R."/>
            <person name="Baliga N.S."/>
            <person name="Thorsson V."/>
            <person name="Sbrogna J."/>
            <person name="Swartzell S."/>
            <person name="Weir D."/>
            <person name="Hall J."/>
            <person name="Dahl T.A."/>
            <person name="Welti R."/>
            <person name="Goo Y.A."/>
            <person name="Leithauser B."/>
            <person name="Keller K."/>
            <person name="Cruz R."/>
            <person name="Danson M.J."/>
            <person name="Hough D.W."/>
            <person name="Maddocks D.G."/>
            <person name="Jablonski P.E."/>
            <person name="Krebs M.P."/>
            <person name="Angevine C.M."/>
            <person name="Dale H."/>
            <person name="Isenbarger T.A."/>
            <person name="Peck R.F."/>
            <person name="Pohlschroder M."/>
            <person name="Spudich J.L."/>
            <person name="Jung K.-H."/>
            <person name="Alam M."/>
            <person name="Freitas T."/>
            <person name="Hou S."/>
            <person name="Daniels C.J."/>
            <person name="Dennis P.P."/>
            <person name="Omer A.D."/>
            <person name="Ebhardt H."/>
            <person name="Lowe T.M."/>
            <person name="Liang P."/>
            <person name="Riley M."/>
            <person name="Hood L."/>
            <person name="DasSarma S."/>
        </authorList>
    </citation>
    <scope>NUCLEOTIDE SEQUENCE [LARGE SCALE GENOMIC DNA]</scope>
    <source>
        <strain>ATCC 700922 / JCM 11081 / NRC-1</strain>
    </source>
</reference>
<proteinExistence type="inferred from homology"/>
<geneLocation type="plasmid">
    <name>pNRC200</name>
</geneLocation>
<feature type="chain" id="PRO_0000142329" description="Aspartate carbamoyltransferase regulatory chain">
    <location>
        <begin position="1"/>
        <end position="154"/>
    </location>
</feature>
<feature type="binding site" evidence="1">
    <location>
        <position position="110"/>
    </location>
    <ligand>
        <name>Zn(2+)</name>
        <dbReference type="ChEBI" id="CHEBI:29105"/>
    </ligand>
</feature>
<feature type="binding site" evidence="1">
    <location>
        <position position="115"/>
    </location>
    <ligand>
        <name>Zn(2+)</name>
        <dbReference type="ChEBI" id="CHEBI:29105"/>
    </ligand>
</feature>
<feature type="binding site" evidence="1">
    <location>
        <position position="136"/>
    </location>
    <ligand>
        <name>Zn(2+)</name>
        <dbReference type="ChEBI" id="CHEBI:29105"/>
    </ligand>
</feature>
<feature type="binding site" evidence="1">
    <location>
        <position position="139"/>
    </location>
    <ligand>
        <name>Zn(2+)</name>
        <dbReference type="ChEBI" id="CHEBI:29105"/>
    </ligand>
</feature>
<name>PYRI_HALSA</name>
<evidence type="ECO:0000255" key="1">
    <source>
        <dbReference type="HAMAP-Rule" id="MF_00002"/>
    </source>
</evidence>
<evidence type="ECO:0000305" key="2"/>
<gene>
    <name evidence="1" type="primary">pyrI</name>
    <name type="ordered locus">VNG_6311G</name>
</gene>